<dbReference type="EC" id="3.1.13.4"/>
<dbReference type="EMBL" id="CU329672">
    <property type="protein sequence ID" value="CAA21225.1"/>
    <property type="molecule type" value="Genomic_DNA"/>
</dbReference>
<dbReference type="PIR" id="T41296">
    <property type="entry name" value="T41296"/>
</dbReference>
<dbReference type="RefSeq" id="NP_587901.1">
    <property type="nucleotide sequence ID" value="NM_001022893.2"/>
</dbReference>
<dbReference type="SMR" id="O74874"/>
<dbReference type="BioGRID" id="275490">
    <property type="interactions" value="531"/>
</dbReference>
<dbReference type="ComplexPortal" id="CPX-25774">
    <property type="entry name" value="CCR4-NOT mRNA deadenylase complex"/>
</dbReference>
<dbReference type="FunCoup" id="O74874">
    <property type="interactions" value="519"/>
</dbReference>
<dbReference type="STRING" id="284812.O74874"/>
<dbReference type="iPTMnet" id="O74874"/>
<dbReference type="PaxDb" id="4896-SPCC31H12.08c.1"/>
<dbReference type="EnsemblFungi" id="SPCC31H12.08c.1">
    <property type="protein sequence ID" value="SPCC31H12.08c.1:pep"/>
    <property type="gene ID" value="SPCC31H12.08c"/>
</dbReference>
<dbReference type="GeneID" id="2538913"/>
<dbReference type="KEGG" id="spo:2538913"/>
<dbReference type="PomBase" id="SPCC31H12.08c">
    <property type="gene designation" value="ccr4"/>
</dbReference>
<dbReference type="VEuPathDB" id="FungiDB:SPCC31H12.08c"/>
<dbReference type="eggNOG" id="KOG0620">
    <property type="taxonomic scope" value="Eukaryota"/>
</dbReference>
<dbReference type="HOGENOM" id="CLU_016428_4_0_1"/>
<dbReference type="InParanoid" id="O74874"/>
<dbReference type="OMA" id="PHYYARA"/>
<dbReference type="PhylomeDB" id="O74874"/>
<dbReference type="CD-CODE" id="0808F6DD">
    <property type="entry name" value="P-body"/>
</dbReference>
<dbReference type="PRO" id="PR:O74874"/>
<dbReference type="Proteomes" id="UP000002485">
    <property type="component" value="Chromosome III"/>
</dbReference>
<dbReference type="GO" id="GO:0030014">
    <property type="term" value="C:CCR4-NOT complex"/>
    <property type="evidence" value="ECO:0000314"/>
    <property type="project" value="PomBase"/>
</dbReference>
<dbReference type="GO" id="GO:0030015">
    <property type="term" value="C:CCR4-NOT core complex"/>
    <property type="evidence" value="ECO:0000314"/>
    <property type="project" value="PomBase"/>
</dbReference>
<dbReference type="GO" id="GO:0005829">
    <property type="term" value="C:cytosol"/>
    <property type="evidence" value="ECO:0007005"/>
    <property type="project" value="PomBase"/>
</dbReference>
<dbReference type="GO" id="GO:0005634">
    <property type="term" value="C:nucleus"/>
    <property type="evidence" value="ECO:0007005"/>
    <property type="project" value="PomBase"/>
</dbReference>
<dbReference type="GO" id="GO:0000932">
    <property type="term" value="C:P-body"/>
    <property type="evidence" value="ECO:0000314"/>
    <property type="project" value="PomBase"/>
</dbReference>
<dbReference type="GO" id="GO:0046872">
    <property type="term" value="F:metal ion binding"/>
    <property type="evidence" value="ECO:0007669"/>
    <property type="project" value="UniProtKB-KW"/>
</dbReference>
<dbReference type="GO" id="GO:0004535">
    <property type="term" value="F:poly(A)-specific ribonuclease activity"/>
    <property type="evidence" value="ECO:0000314"/>
    <property type="project" value="PomBase"/>
</dbReference>
<dbReference type="GO" id="GO:0003723">
    <property type="term" value="F:RNA binding"/>
    <property type="evidence" value="ECO:0007669"/>
    <property type="project" value="UniProtKB-KW"/>
</dbReference>
<dbReference type="GO" id="GO:0000289">
    <property type="term" value="P:nuclear-transcribed mRNA poly(A) tail shortening"/>
    <property type="evidence" value="ECO:0000314"/>
    <property type="project" value="PomBase"/>
</dbReference>
<dbReference type="CDD" id="cd09097">
    <property type="entry name" value="Deadenylase_CCR4"/>
    <property type="match status" value="1"/>
</dbReference>
<dbReference type="FunFam" id="3.60.10.10:FF:000037">
    <property type="entry name" value="Glucose-repressible alcohol dehydrogenase transcriptional effector"/>
    <property type="match status" value="1"/>
</dbReference>
<dbReference type="Gene3D" id="3.60.10.10">
    <property type="entry name" value="Endonuclease/exonuclease/phosphatase"/>
    <property type="match status" value="1"/>
</dbReference>
<dbReference type="Gene3D" id="3.80.10.10">
    <property type="entry name" value="Ribonuclease Inhibitor"/>
    <property type="match status" value="1"/>
</dbReference>
<dbReference type="InterPro" id="IPR050410">
    <property type="entry name" value="CCR4/nocturin_mRNA_transcr"/>
</dbReference>
<dbReference type="InterPro" id="IPR036691">
    <property type="entry name" value="Endo/exonu/phosph_ase_sf"/>
</dbReference>
<dbReference type="InterPro" id="IPR005135">
    <property type="entry name" value="Endo/exonuclease/phosphatase"/>
</dbReference>
<dbReference type="InterPro" id="IPR001611">
    <property type="entry name" value="Leu-rich_rpt"/>
</dbReference>
<dbReference type="InterPro" id="IPR025875">
    <property type="entry name" value="Leu-rich_rpt_4"/>
</dbReference>
<dbReference type="InterPro" id="IPR003591">
    <property type="entry name" value="Leu-rich_rpt_typical-subtyp"/>
</dbReference>
<dbReference type="InterPro" id="IPR032675">
    <property type="entry name" value="LRR_dom_sf"/>
</dbReference>
<dbReference type="PANTHER" id="PTHR12121">
    <property type="entry name" value="CARBON CATABOLITE REPRESSOR PROTEIN 4"/>
    <property type="match status" value="1"/>
</dbReference>
<dbReference type="PANTHER" id="PTHR12121:SF100">
    <property type="entry name" value="POLY(A)-SPECIFIC RIBONUCLEASE"/>
    <property type="match status" value="1"/>
</dbReference>
<dbReference type="Pfam" id="PF03372">
    <property type="entry name" value="Exo_endo_phos"/>
    <property type="match status" value="1"/>
</dbReference>
<dbReference type="Pfam" id="PF12799">
    <property type="entry name" value="LRR_4"/>
    <property type="match status" value="1"/>
</dbReference>
<dbReference type="SMART" id="SM00369">
    <property type="entry name" value="LRR_TYP"/>
    <property type="match status" value="3"/>
</dbReference>
<dbReference type="SUPFAM" id="SSF56219">
    <property type="entry name" value="DNase I-like"/>
    <property type="match status" value="1"/>
</dbReference>
<dbReference type="SUPFAM" id="SSF52058">
    <property type="entry name" value="L domain-like"/>
    <property type="match status" value="1"/>
</dbReference>
<dbReference type="PROSITE" id="PS51450">
    <property type="entry name" value="LRR"/>
    <property type="match status" value="4"/>
</dbReference>
<accession>O74874</accession>
<comment type="function">
    <text evidence="3 6">Acts as a catalytic component of the CCR4-NOT core complex, which in the nucleus seems to be a general transcription factor, and in the cytoplasm the major mRNA deadenylase involved in mRNA turnover (By similarity). Ccr4 has 3'-5' RNase activity with a strong preference for polyadenylated substrates and also low exonuclease activity towards single-stranded DNA (By similarity). Participates in the shortening of poly(A)-tails (PubMed:26942678). Erh1-mmi1 complex-mediated recruitment of CCR4-NOT to target RNAs promotes heterochromatin formation at RNAi-dependent heterochromatin domains (HOODs), including a subset of meiotic genes, lncRNAs and retrotransposons (PubMed:26942678). Recruitment of the CCR4-NOT complex to rDNA promotes rDNA heterochromatin assembly (PubMed:26942678).</text>
</comment>
<comment type="catalytic activity">
    <reaction>
        <text>Exonucleolytic cleavage of poly(A) to 5'-AMP.</text>
        <dbReference type="EC" id="3.1.13.4"/>
    </reaction>
</comment>
<comment type="cofactor">
    <cofactor evidence="1">
        <name>Mg(2+)</name>
        <dbReference type="ChEBI" id="CHEBI:18420"/>
    </cofactor>
</comment>
<comment type="subunit">
    <text evidence="3 6">Subunit of the CCR4-NOT core complex (By similarity). Interacts with pir2 (PubMed:26942678).</text>
</comment>
<comment type="subcellular location">
    <subcellularLocation>
        <location evidence="5">Cytoplasm</location>
    </subcellularLocation>
    <subcellularLocation>
        <location evidence="5">Nucleus</location>
    </subcellularLocation>
</comment>
<comment type="disruption phenotype">
    <text evidence="6">Decreases heterochromatin formation at rDNA and subtelomeres.</text>
</comment>
<comment type="similarity">
    <text evidence="7">Belongs to the CCR4/nocturin family.</text>
</comment>
<protein>
    <recommendedName>
        <fullName evidence="8">CCR4-Not complex 3'-5'-exoribonuclease subunit Ccr4</fullName>
        <ecNumber>3.1.13.4</ecNumber>
    </recommendedName>
    <alternativeName>
        <fullName>Carbon catabolite repressor protein 4</fullName>
    </alternativeName>
    <alternativeName>
        <fullName>Cytoplasmic deadenylase</fullName>
    </alternativeName>
    <alternativeName>
        <fullName>Glucose-repressible alcohol dehydrogenase transcriptional effector</fullName>
    </alternativeName>
</protein>
<proteinExistence type="evidence at protein level"/>
<keyword id="KW-0010">Activator</keyword>
<keyword id="KW-0963">Cytoplasm</keyword>
<keyword id="KW-0269">Exonuclease</keyword>
<keyword id="KW-0378">Hydrolase</keyword>
<keyword id="KW-0433">Leucine-rich repeat</keyword>
<keyword id="KW-0460">Magnesium</keyword>
<keyword id="KW-0479">Metal-binding</keyword>
<keyword id="KW-0540">Nuclease</keyword>
<keyword id="KW-0539">Nucleus</keyword>
<keyword id="KW-1185">Reference proteome</keyword>
<keyword id="KW-0677">Repeat</keyword>
<keyword id="KW-0678">Repressor</keyword>
<keyword id="KW-0694">RNA-binding</keyword>
<keyword id="KW-0804">Transcription</keyword>
<keyword id="KW-0805">Transcription regulation</keyword>
<sequence>MFNPRYTQGTIYPGAHPGLLTPDHQHAAILSVQNSPALENSNISEHWKQQIALATQSRSFSSPHQRAHNAAALARSGGPGFSMNYNARTGAFTGGPNAAGLSSLGGKYNTSSTTTTLTTSTTLNTSSGTTLNSTSKTTTSSVAVDDQKSKSDSKKERRDWTCLDLGGIGLRNVSTDLFKFSFLTELYINHNNLTRLPPEIGKLKNLVILDASGNSIKTIPPELGLLTELREVLLFDNMISVIPAELGTLFQLKILGIEGNPLQDVYKNQIMESGTAGLIAALRDGCPVGPPPPERGWEKLVSDDDDDVNDNVSTSVRDLTAADSNKPSTTSKNLKFTIMSYNVLCERYATSTLYGYTPSWALSWSYRKDLIMQELGGYNADIICLQEVDVENYDTFFAPQMSLKGYKGVHFPKSRVRTMNEVERRIVDGCATFFKTSKYVMHEKMVIEYNQAPSLRRQDIKLTSNMYNRVMTKDNISVITLLENKENGSRLIVANCHIHWDPQFRDVKVIQVAMLMDEIAQVATKFRNMPSKIPSDQLKDERPTYPEYLKIPILICGDFNSVQGSGVYDFLSSGSISQNHEDFMNNDYGEYTVNGRSHAFNLKSAYGESEALSFTNYTPGFKGAIDHIWYTGNSLEVTGLLKGVDKDYLSGVVGFPNAHFPSDHICLLAEFKVKQEKTPLPSSKFNNDKK</sequence>
<gene>
    <name type="primary">ccr4</name>
    <name type="ORF">SPCC31H12.08c</name>
    <name type="ORF">SPCC5E4.02c</name>
</gene>
<feature type="chain" id="PRO_0000290617" description="CCR4-Not complex 3'-5'-exoribonuclease subunit Ccr4">
    <location>
        <begin position="1"/>
        <end position="690"/>
    </location>
</feature>
<feature type="repeat" description="LRR 1">
    <location>
        <begin position="157"/>
        <end position="180"/>
    </location>
</feature>
<feature type="repeat" description="LRR 2">
    <location>
        <begin position="182"/>
        <end position="203"/>
    </location>
</feature>
<feature type="repeat" description="LRR 3">
    <location>
        <begin position="205"/>
        <end position="226"/>
    </location>
</feature>
<feature type="repeat" description="LRR 4">
    <location>
        <begin position="228"/>
        <end position="249"/>
    </location>
</feature>
<feature type="repeat" description="LRR 5">
    <location>
        <begin position="251"/>
        <end position="272"/>
    </location>
</feature>
<feature type="region of interest" description="Disordered" evidence="4">
    <location>
        <begin position="110"/>
        <end position="156"/>
    </location>
</feature>
<feature type="compositionally biased region" description="Low complexity" evidence="4">
    <location>
        <begin position="110"/>
        <end position="144"/>
    </location>
</feature>
<feature type="compositionally biased region" description="Basic and acidic residues" evidence="4">
    <location>
        <begin position="145"/>
        <end position="156"/>
    </location>
</feature>
<feature type="binding site" evidence="2">
    <location>
        <position position="387"/>
    </location>
    <ligand>
        <name>Mg(2+)</name>
        <dbReference type="ChEBI" id="CHEBI:18420"/>
    </ligand>
</feature>
<name>CCR4_SCHPO</name>
<organism>
    <name type="scientific">Schizosaccharomyces pombe (strain 972 / ATCC 24843)</name>
    <name type="common">Fission yeast</name>
    <dbReference type="NCBI Taxonomy" id="284812"/>
    <lineage>
        <taxon>Eukaryota</taxon>
        <taxon>Fungi</taxon>
        <taxon>Dikarya</taxon>
        <taxon>Ascomycota</taxon>
        <taxon>Taphrinomycotina</taxon>
        <taxon>Schizosaccharomycetes</taxon>
        <taxon>Schizosaccharomycetales</taxon>
        <taxon>Schizosaccharomycetaceae</taxon>
        <taxon>Schizosaccharomyces</taxon>
    </lineage>
</organism>
<evidence type="ECO:0000250" key="1"/>
<evidence type="ECO:0000250" key="2">
    <source>
        <dbReference type="UniProtKB" id="O95551"/>
    </source>
</evidence>
<evidence type="ECO:0000250" key="3">
    <source>
        <dbReference type="UniProtKB" id="P31384"/>
    </source>
</evidence>
<evidence type="ECO:0000256" key="4">
    <source>
        <dbReference type="SAM" id="MobiDB-lite"/>
    </source>
</evidence>
<evidence type="ECO:0000269" key="5">
    <source>
    </source>
</evidence>
<evidence type="ECO:0000269" key="6">
    <source>
    </source>
</evidence>
<evidence type="ECO:0000305" key="7"/>
<evidence type="ECO:0000312" key="8">
    <source>
        <dbReference type="PomBase" id="SPCC31H12.08c"/>
    </source>
</evidence>
<reference key="1">
    <citation type="journal article" date="2002" name="Nature">
        <title>The genome sequence of Schizosaccharomyces pombe.</title>
        <authorList>
            <person name="Wood V."/>
            <person name="Gwilliam R."/>
            <person name="Rajandream M.A."/>
            <person name="Lyne M.H."/>
            <person name="Lyne R."/>
            <person name="Stewart A."/>
            <person name="Sgouros J.G."/>
            <person name="Peat N."/>
            <person name="Hayles J."/>
            <person name="Baker S.G."/>
            <person name="Basham D."/>
            <person name="Bowman S."/>
            <person name="Brooks K."/>
            <person name="Brown D."/>
            <person name="Brown S."/>
            <person name="Chillingworth T."/>
            <person name="Churcher C.M."/>
            <person name="Collins M."/>
            <person name="Connor R."/>
            <person name="Cronin A."/>
            <person name="Davis P."/>
            <person name="Feltwell T."/>
            <person name="Fraser A."/>
            <person name="Gentles S."/>
            <person name="Goble A."/>
            <person name="Hamlin N."/>
            <person name="Harris D.E."/>
            <person name="Hidalgo J."/>
            <person name="Hodgson G."/>
            <person name="Holroyd S."/>
            <person name="Hornsby T."/>
            <person name="Howarth S."/>
            <person name="Huckle E.J."/>
            <person name="Hunt S."/>
            <person name="Jagels K."/>
            <person name="James K.D."/>
            <person name="Jones L."/>
            <person name="Jones M."/>
            <person name="Leather S."/>
            <person name="McDonald S."/>
            <person name="McLean J."/>
            <person name="Mooney P."/>
            <person name="Moule S."/>
            <person name="Mungall K.L."/>
            <person name="Murphy L.D."/>
            <person name="Niblett D."/>
            <person name="Odell C."/>
            <person name="Oliver K."/>
            <person name="O'Neil S."/>
            <person name="Pearson D."/>
            <person name="Quail M.A."/>
            <person name="Rabbinowitsch E."/>
            <person name="Rutherford K.M."/>
            <person name="Rutter S."/>
            <person name="Saunders D."/>
            <person name="Seeger K."/>
            <person name="Sharp S."/>
            <person name="Skelton J."/>
            <person name="Simmonds M.N."/>
            <person name="Squares R."/>
            <person name="Squares S."/>
            <person name="Stevens K."/>
            <person name="Taylor K."/>
            <person name="Taylor R.G."/>
            <person name="Tivey A."/>
            <person name="Walsh S.V."/>
            <person name="Warren T."/>
            <person name="Whitehead S."/>
            <person name="Woodward J.R."/>
            <person name="Volckaert G."/>
            <person name="Aert R."/>
            <person name="Robben J."/>
            <person name="Grymonprez B."/>
            <person name="Weltjens I."/>
            <person name="Vanstreels E."/>
            <person name="Rieger M."/>
            <person name="Schaefer M."/>
            <person name="Mueller-Auer S."/>
            <person name="Gabel C."/>
            <person name="Fuchs M."/>
            <person name="Duesterhoeft A."/>
            <person name="Fritzc C."/>
            <person name="Holzer E."/>
            <person name="Moestl D."/>
            <person name="Hilbert H."/>
            <person name="Borzym K."/>
            <person name="Langer I."/>
            <person name="Beck A."/>
            <person name="Lehrach H."/>
            <person name="Reinhardt R."/>
            <person name="Pohl T.M."/>
            <person name="Eger P."/>
            <person name="Zimmermann W."/>
            <person name="Wedler H."/>
            <person name="Wambutt R."/>
            <person name="Purnelle B."/>
            <person name="Goffeau A."/>
            <person name="Cadieu E."/>
            <person name="Dreano S."/>
            <person name="Gloux S."/>
            <person name="Lelaure V."/>
            <person name="Mottier S."/>
            <person name="Galibert F."/>
            <person name="Aves S.J."/>
            <person name="Xiang Z."/>
            <person name="Hunt C."/>
            <person name="Moore K."/>
            <person name="Hurst S.M."/>
            <person name="Lucas M."/>
            <person name="Rochet M."/>
            <person name="Gaillardin C."/>
            <person name="Tallada V.A."/>
            <person name="Garzon A."/>
            <person name="Thode G."/>
            <person name="Daga R.R."/>
            <person name="Cruzado L."/>
            <person name="Jimenez J."/>
            <person name="Sanchez M."/>
            <person name="del Rey F."/>
            <person name="Benito J."/>
            <person name="Dominguez A."/>
            <person name="Revuelta J.L."/>
            <person name="Moreno S."/>
            <person name="Armstrong J."/>
            <person name="Forsburg S.L."/>
            <person name="Cerutti L."/>
            <person name="Lowe T."/>
            <person name="McCombie W.R."/>
            <person name="Paulsen I."/>
            <person name="Potashkin J."/>
            <person name="Shpakovski G.V."/>
            <person name="Ussery D."/>
            <person name="Barrell B.G."/>
            <person name="Nurse P."/>
        </authorList>
    </citation>
    <scope>NUCLEOTIDE SEQUENCE [LARGE SCALE GENOMIC DNA]</scope>
    <source>
        <strain>972 / ATCC 24843</strain>
    </source>
</reference>
<reference key="2">
    <citation type="journal article" date="2006" name="Nat. Biotechnol.">
        <title>ORFeome cloning and global analysis of protein localization in the fission yeast Schizosaccharomyces pombe.</title>
        <authorList>
            <person name="Matsuyama A."/>
            <person name="Arai R."/>
            <person name="Yashiroda Y."/>
            <person name="Shirai A."/>
            <person name="Kamata A."/>
            <person name="Sekido S."/>
            <person name="Kobayashi Y."/>
            <person name="Hashimoto A."/>
            <person name="Hamamoto M."/>
            <person name="Hiraoka Y."/>
            <person name="Horinouchi S."/>
            <person name="Yoshida M."/>
        </authorList>
    </citation>
    <scope>SUBCELLULAR LOCATION [LARGE SCALE ANALYSIS]</scope>
</reference>
<reference key="3">
    <citation type="journal article" date="2016" name="Mol. Cell">
        <title>Enhancer of Rudimentary Cooperates with Conserved RNA-Processing Factors to Promote Meiotic mRNA Decay and Facultative Heterochromatin Assembly.</title>
        <authorList>
            <person name="Sugiyama T."/>
            <person name="Thillainadesan G."/>
            <person name="Chalamcharla V.R."/>
            <person name="Meng Z."/>
            <person name="Balachandran V."/>
            <person name="Dhakshnamoorthy J."/>
            <person name="Zhou M."/>
            <person name="Grewal S.I.S."/>
        </authorList>
    </citation>
    <scope>FUNCTION</scope>
    <scope>INTERACTION WITH PIR2</scope>
    <scope>DISRUPTION PHENOTYPE</scope>
</reference>